<dbReference type="EC" id="2.8.1.13" evidence="1"/>
<dbReference type="EMBL" id="CP001078">
    <property type="protein sequence ID" value="ACD51450.1"/>
    <property type="molecule type" value="Genomic_DNA"/>
</dbReference>
<dbReference type="RefSeq" id="WP_003369813.1">
    <property type="nucleotide sequence ID" value="NC_010723.1"/>
</dbReference>
<dbReference type="SMR" id="B2V3V9"/>
<dbReference type="KEGG" id="cbt:CLH_1122"/>
<dbReference type="HOGENOM" id="CLU_035188_0_0_9"/>
<dbReference type="GO" id="GO:0005737">
    <property type="term" value="C:cytoplasm"/>
    <property type="evidence" value="ECO:0007669"/>
    <property type="project" value="UniProtKB-SubCell"/>
</dbReference>
<dbReference type="GO" id="GO:0005524">
    <property type="term" value="F:ATP binding"/>
    <property type="evidence" value="ECO:0007669"/>
    <property type="project" value="UniProtKB-KW"/>
</dbReference>
<dbReference type="GO" id="GO:0000049">
    <property type="term" value="F:tRNA binding"/>
    <property type="evidence" value="ECO:0007669"/>
    <property type="project" value="UniProtKB-KW"/>
</dbReference>
<dbReference type="GO" id="GO:0103016">
    <property type="term" value="F:tRNA-uridine 2-sulfurtransferase activity"/>
    <property type="evidence" value="ECO:0007669"/>
    <property type="project" value="UniProtKB-EC"/>
</dbReference>
<dbReference type="GO" id="GO:0002143">
    <property type="term" value="P:tRNA wobble position uridine thiolation"/>
    <property type="evidence" value="ECO:0007669"/>
    <property type="project" value="TreeGrafter"/>
</dbReference>
<dbReference type="CDD" id="cd01998">
    <property type="entry name" value="MnmA_TRMU-like"/>
    <property type="match status" value="1"/>
</dbReference>
<dbReference type="FunFam" id="2.30.30.280:FF:000001">
    <property type="entry name" value="tRNA-specific 2-thiouridylase MnmA"/>
    <property type="match status" value="1"/>
</dbReference>
<dbReference type="FunFam" id="2.40.30.10:FF:000023">
    <property type="entry name" value="tRNA-specific 2-thiouridylase MnmA"/>
    <property type="match status" value="1"/>
</dbReference>
<dbReference type="FunFam" id="3.40.50.620:FF:000115">
    <property type="entry name" value="tRNA-specific 2-thiouridylase MnmA"/>
    <property type="match status" value="1"/>
</dbReference>
<dbReference type="Gene3D" id="2.30.30.280">
    <property type="entry name" value="Adenine nucleotide alpha hydrolases-like domains"/>
    <property type="match status" value="1"/>
</dbReference>
<dbReference type="Gene3D" id="3.40.50.620">
    <property type="entry name" value="HUPs"/>
    <property type="match status" value="1"/>
</dbReference>
<dbReference type="Gene3D" id="2.40.30.10">
    <property type="entry name" value="Translation factors"/>
    <property type="match status" value="1"/>
</dbReference>
<dbReference type="HAMAP" id="MF_00144">
    <property type="entry name" value="tRNA_thiouridyl_MnmA"/>
    <property type="match status" value="1"/>
</dbReference>
<dbReference type="InterPro" id="IPR004506">
    <property type="entry name" value="MnmA-like"/>
</dbReference>
<dbReference type="InterPro" id="IPR046885">
    <property type="entry name" value="MnmA-like_C"/>
</dbReference>
<dbReference type="InterPro" id="IPR046884">
    <property type="entry name" value="MnmA-like_central"/>
</dbReference>
<dbReference type="InterPro" id="IPR023382">
    <property type="entry name" value="MnmA-like_central_sf"/>
</dbReference>
<dbReference type="InterPro" id="IPR014729">
    <property type="entry name" value="Rossmann-like_a/b/a_fold"/>
</dbReference>
<dbReference type="NCBIfam" id="NF001138">
    <property type="entry name" value="PRK00143.1"/>
    <property type="match status" value="1"/>
</dbReference>
<dbReference type="NCBIfam" id="TIGR00420">
    <property type="entry name" value="trmU"/>
    <property type="match status" value="1"/>
</dbReference>
<dbReference type="PANTHER" id="PTHR11933:SF5">
    <property type="entry name" value="MITOCHONDRIAL TRNA-SPECIFIC 2-THIOURIDYLASE 1"/>
    <property type="match status" value="1"/>
</dbReference>
<dbReference type="PANTHER" id="PTHR11933">
    <property type="entry name" value="TRNA 5-METHYLAMINOMETHYL-2-THIOURIDYLATE -METHYLTRANSFERASE"/>
    <property type="match status" value="1"/>
</dbReference>
<dbReference type="Pfam" id="PF03054">
    <property type="entry name" value="tRNA_Me_trans"/>
    <property type="match status" value="1"/>
</dbReference>
<dbReference type="Pfam" id="PF20258">
    <property type="entry name" value="tRNA_Me_trans_C"/>
    <property type="match status" value="1"/>
</dbReference>
<dbReference type="Pfam" id="PF20259">
    <property type="entry name" value="tRNA_Me_trans_M"/>
    <property type="match status" value="1"/>
</dbReference>
<dbReference type="SUPFAM" id="SSF52402">
    <property type="entry name" value="Adenine nucleotide alpha hydrolases-like"/>
    <property type="match status" value="1"/>
</dbReference>
<sequence length="361" mass="40491">MSLTKKKVLVGMSGGVDSSVAAYLLKEQGYEVIGATMQIWQEDKEVEEREGGCCSLSAVEDARRVCDKLDIPFYVLNFRDSFKKKVIEPFIQEYIDGRTPNPCIECNKHLKFDELLRKAQGIGVDYIATGHYAKIEKKDDRYMLIRSDDDRKDQTYALYNFTQDQLAHTLMPCGEYTKDRIREIAKEIGLAVHNKKDSEEICFISDNDHGKYILNAKPGAVKSGNFVDKSGNVLGKHKGIVYYTIGQRKGLGLSVGRPVFVTDINPRTNEVVIGAEEDIFKTELIAGDLNFITFDKLEKEIEVEAKIRYSAKPAKATIVPLKDGRVKVVFDEKQRAITKGQSVVFYNGNIVIGGGIIEAII</sequence>
<accession>B2V3V9</accession>
<feature type="chain" id="PRO_0000349584" description="tRNA-specific 2-thiouridylase MnmA">
    <location>
        <begin position="1"/>
        <end position="361"/>
    </location>
</feature>
<feature type="region of interest" description="Interaction with tRNA" evidence="1">
    <location>
        <begin position="152"/>
        <end position="154"/>
    </location>
</feature>
<feature type="region of interest" description="Interaction with tRNA" evidence="1">
    <location>
        <begin position="308"/>
        <end position="309"/>
    </location>
</feature>
<feature type="active site" description="Nucleophile" evidence="1">
    <location>
        <position position="106"/>
    </location>
</feature>
<feature type="active site" description="Cysteine persulfide intermediate" evidence="1">
    <location>
        <position position="202"/>
    </location>
</feature>
<feature type="binding site" evidence="1">
    <location>
        <begin position="11"/>
        <end position="18"/>
    </location>
    <ligand>
        <name>ATP</name>
        <dbReference type="ChEBI" id="CHEBI:30616"/>
    </ligand>
</feature>
<feature type="binding site" evidence="1">
    <location>
        <position position="37"/>
    </location>
    <ligand>
        <name>ATP</name>
        <dbReference type="ChEBI" id="CHEBI:30616"/>
    </ligand>
</feature>
<feature type="binding site" evidence="1">
    <location>
        <position position="130"/>
    </location>
    <ligand>
        <name>ATP</name>
        <dbReference type="ChEBI" id="CHEBI:30616"/>
    </ligand>
</feature>
<feature type="site" description="Interaction with tRNA" evidence="1">
    <location>
        <position position="131"/>
    </location>
</feature>
<feature type="site" description="Interaction with tRNA" evidence="1">
    <location>
        <position position="341"/>
    </location>
</feature>
<feature type="disulfide bond" description="Alternate" evidence="1">
    <location>
        <begin position="106"/>
        <end position="202"/>
    </location>
</feature>
<evidence type="ECO:0000255" key="1">
    <source>
        <dbReference type="HAMAP-Rule" id="MF_00144"/>
    </source>
</evidence>
<comment type="function">
    <text evidence="1">Catalyzes the 2-thiolation of uridine at the wobble position (U34) of tRNA, leading to the formation of s(2)U34.</text>
</comment>
<comment type="catalytic activity">
    <reaction evidence="1">
        <text>S-sulfanyl-L-cysteinyl-[protein] + uridine(34) in tRNA + AH2 + ATP = 2-thiouridine(34) in tRNA + L-cysteinyl-[protein] + A + AMP + diphosphate + H(+)</text>
        <dbReference type="Rhea" id="RHEA:47032"/>
        <dbReference type="Rhea" id="RHEA-COMP:10131"/>
        <dbReference type="Rhea" id="RHEA-COMP:11726"/>
        <dbReference type="Rhea" id="RHEA-COMP:11727"/>
        <dbReference type="Rhea" id="RHEA-COMP:11728"/>
        <dbReference type="ChEBI" id="CHEBI:13193"/>
        <dbReference type="ChEBI" id="CHEBI:15378"/>
        <dbReference type="ChEBI" id="CHEBI:17499"/>
        <dbReference type="ChEBI" id="CHEBI:29950"/>
        <dbReference type="ChEBI" id="CHEBI:30616"/>
        <dbReference type="ChEBI" id="CHEBI:33019"/>
        <dbReference type="ChEBI" id="CHEBI:61963"/>
        <dbReference type="ChEBI" id="CHEBI:65315"/>
        <dbReference type="ChEBI" id="CHEBI:87170"/>
        <dbReference type="ChEBI" id="CHEBI:456215"/>
        <dbReference type="EC" id="2.8.1.13"/>
    </reaction>
</comment>
<comment type="subcellular location">
    <subcellularLocation>
        <location evidence="1">Cytoplasm</location>
    </subcellularLocation>
</comment>
<comment type="similarity">
    <text evidence="1">Belongs to the MnmA/TRMU family.</text>
</comment>
<name>MNMA_CLOBA</name>
<proteinExistence type="inferred from homology"/>
<organism>
    <name type="scientific">Clostridium botulinum (strain Alaska E43 / Type E3)</name>
    <dbReference type="NCBI Taxonomy" id="508767"/>
    <lineage>
        <taxon>Bacteria</taxon>
        <taxon>Bacillati</taxon>
        <taxon>Bacillota</taxon>
        <taxon>Clostridia</taxon>
        <taxon>Eubacteriales</taxon>
        <taxon>Clostridiaceae</taxon>
        <taxon>Clostridium</taxon>
    </lineage>
</organism>
<reference key="1">
    <citation type="submission" date="2008-05" db="EMBL/GenBank/DDBJ databases">
        <title>Complete genome sequence of Clostridium botulinum E3 str. Alaska E43.</title>
        <authorList>
            <person name="Brinkac L.M."/>
            <person name="Brown J.L."/>
            <person name="Bruce D."/>
            <person name="Detter C."/>
            <person name="Munk C."/>
            <person name="Smith L.A."/>
            <person name="Smith T.J."/>
            <person name="Sutton G."/>
            <person name="Brettin T.S."/>
        </authorList>
    </citation>
    <scope>NUCLEOTIDE SEQUENCE [LARGE SCALE GENOMIC DNA]</scope>
    <source>
        <strain>Alaska E43 / Type E3</strain>
    </source>
</reference>
<gene>
    <name evidence="1" type="primary">mnmA</name>
    <name type="ordered locus">CLH_1122</name>
</gene>
<keyword id="KW-0067">ATP-binding</keyword>
<keyword id="KW-0963">Cytoplasm</keyword>
<keyword id="KW-1015">Disulfide bond</keyword>
<keyword id="KW-0547">Nucleotide-binding</keyword>
<keyword id="KW-0694">RNA-binding</keyword>
<keyword id="KW-0808">Transferase</keyword>
<keyword id="KW-0819">tRNA processing</keyword>
<keyword id="KW-0820">tRNA-binding</keyword>
<protein>
    <recommendedName>
        <fullName evidence="1">tRNA-specific 2-thiouridylase MnmA</fullName>
        <ecNumber evidence="1">2.8.1.13</ecNumber>
    </recommendedName>
</protein>